<gene>
    <name evidence="1" type="primary">gsiD</name>
    <name type="ordered locus">SFV_0815</name>
</gene>
<accession>P0C2L2</accession>
<evidence type="ECO:0000250" key="1">
    <source>
        <dbReference type="UniProtKB" id="P75799"/>
    </source>
</evidence>
<evidence type="ECO:0000255" key="2"/>
<evidence type="ECO:0000255" key="3">
    <source>
        <dbReference type="PROSITE-ProRule" id="PRU00441"/>
    </source>
</evidence>
<evidence type="ECO:0000305" key="4"/>
<organism>
    <name type="scientific">Shigella flexneri serotype 5b (strain 8401)</name>
    <dbReference type="NCBI Taxonomy" id="373384"/>
    <lineage>
        <taxon>Bacteria</taxon>
        <taxon>Pseudomonadati</taxon>
        <taxon>Pseudomonadota</taxon>
        <taxon>Gammaproteobacteria</taxon>
        <taxon>Enterobacterales</taxon>
        <taxon>Enterobacteriaceae</taxon>
        <taxon>Shigella</taxon>
    </lineage>
</organism>
<sequence>MRLFNWRRQAVLNAMPLVKPDQVRTPWHEFWRRFRRQHMAMTAALFVILLIVVAIFARWIAPYDAENYFDYDNLNNGPSLQHWFGVDSLGRDIFSRVLVGAQISLAAGVFAVFIGVAIGTLLGLLAGYYEGWWDRLIMRICDVLFAFPGILLAIAVVAVLGSGIANVIIAVAIFSIPAFARLVRGNTLVLKQQTFIESARSIGASDMTILLRHILPGTVSSIVVFFTMRIGTSIISAASLSFLGLGAQPPTPEWGAMLNEARADMVIAPHVAVFPALAIFLTVLAFNLLGDGLRDALDPKIKG</sequence>
<feature type="chain" id="PRO_0000280014" description="Glutathione transport system permease protein GsiD">
    <location>
        <begin position="1"/>
        <end position="303"/>
    </location>
</feature>
<feature type="transmembrane region" description="Helical" evidence="3">
    <location>
        <begin position="40"/>
        <end position="60"/>
    </location>
</feature>
<feature type="transmembrane region" description="Helical" evidence="3">
    <location>
        <begin position="105"/>
        <end position="125"/>
    </location>
</feature>
<feature type="transmembrane region" description="Helical" evidence="3">
    <location>
        <begin position="144"/>
        <end position="164"/>
    </location>
</feature>
<feature type="transmembrane region" description="Helical" evidence="3">
    <location>
        <begin position="165"/>
        <end position="185"/>
    </location>
</feature>
<feature type="transmembrane region" description="Helical" evidence="3">
    <location>
        <begin position="222"/>
        <end position="242"/>
    </location>
</feature>
<feature type="transmembrane region" description="Helical" evidence="3">
    <location>
        <begin position="266"/>
        <end position="286"/>
    </location>
</feature>
<feature type="domain" description="ABC transmembrane type-1" evidence="3">
    <location>
        <begin position="101"/>
        <end position="290"/>
    </location>
</feature>
<protein>
    <recommendedName>
        <fullName evidence="1">Glutathione transport system permease protein GsiD</fullName>
    </recommendedName>
</protein>
<comment type="function">
    <text evidence="1">Part of the ABC transporter complex GsiABCD involved in glutathione import. Probably responsible for the translocation of the substrate across the membrane.</text>
</comment>
<comment type="subunit">
    <text evidence="1">The complex is composed of two ATP-binding proteins (GsiA), two transmembrane proteins (GsiC and GsiD) and a solute-binding protein (GsiB).</text>
</comment>
<comment type="subcellular location">
    <subcellularLocation>
        <location evidence="1">Cell inner membrane</location>
        <topology evidence="2">Multi-pass membrane protein</topology>
    </subcellularLocation>
</comment>
<comment type="similarity">
    <text evidence="4">Belongs to the binding-protein-dependent transport system permease family.</text>
</comment>
<comment type="sequence caution" evidence="4">
    <conflict type="frameshift">
        <sequence resource="EMBL" id="CP000266"/>
    </conflict>
</comment>
<name>GSID_SHIF8</name>
<dbReference type="EMBL" id="CP000266">
    <property type="status" value="NOT_ANNOTATED_CDS"/>
    <property type="molecule type" value="Genomic_DNA"/>
</dbReference>
<dbReference type="SMR" id="P0C2L2"/>
<dbReference type="Proteomes" id="UP000000659">
    <property type="component" value="Chromosome"/>
</dbReference>
<dbReference type="GO" id="GO:0005886">
    <property type="term" value="C:plasma membrane"/>
    <property type="evidence" value="ECO:0007669"/>
    <property type="project" value="UniProtKB-SubCell"/>
</dbReference>
<dbReference type="GO" id="GO:0071916">
    <property type="term" value="F:dipeptide transmembrane transporter activity"/>
    <property type="evidence" value="ECO:0007669"/>
    <property type="project" value="TreeGrafter"/>
</dbReference>
<dbReference type="CDD" id="cd06261">
    <property type="entry name" value="TM_PBP2"/>
    <property type="match status" value="1"/>
</dbReference>
<dbReference type="FunFam" id="1.10.3720.10:FF:000022">
    <property type="entry name" value="Glutathione ABC transporter permease GsiD"/>
    <property type="match status" value="1"/>
</dbReference>
<dbReference type="Gene3D" id="1.10.3720.10">
    <property type="entry name" value="MetI-like"/>
    <property type="match status" value="1"/>
</dbReference>
<dbReference type="InterPro" id="IPR050366">
    <property type="entry name" value="BP-dependent_transpt_permease"/>
</dbReference>
<dbReference type="InterPro" id="IPR000515">
    <property type="entry name" value="MetI-like"/>
</dbReference>
<dbReference type="InterPro" id="IPR035906">
    <property type="entry name" value="MetI-like_sf"/>
</dbReference>
<dbReference type="InterPro" id="IPR025966">
    <property type="entry name" value="OppC_N"/>
</dbReference>
<dbReference type="NCBIfam" id="NF011662">
    <property type="entry name" value="PRK15082.1"/>
    <property type="match status" value="1"/>
</dbReference>
<dbReference type="PANTHER" id="PTHR43386:SF3">
    <property type="entry name" value="GLUTATHIONE TRANSPORT SYSTEM PERMEASE PROTEIN GSID"/>
    <property type="match status" value="1"/>
</dbReference>
<dbReference type="PANTHER" id="PTHR43386">
    <property type="entry name" value="OLIGOPEPTIDE TRANSPORT SYSTEM PERMEASE PROTEIN APPC"/>
    <property type="match status" value="1"/>
</dbReference>
<dbReference type="Pfam" id="PF00528">
    <property type="entry name" value="BPD_transp_1"/>
    <property type="match status" value="1"/>
</dbReference>
<dbReference type="Pfam" id="PF12911">
    <property type="entry name" value="OppC_N"/>
    <property type="match status" value="1"/>
</dbReference>
<dbReference type="SUPFAM" id="SSF161098">
    <property type="entry name" value="MetI-like"/>
    <property type="match status" value="1"/>
</dbReference>
<dbReference type="PROSITE" id="PS50928">
    <property type="entry name" value="ABC_TM1"/>
    <property type="match status" value="1"/>
</dbReference>
<keyword id="KW-0997">Cell inner membrane</keyword>
<keyword id="KW-1003">Cell membrane</keyword>
<keyword id="KW-0472">Membrane</keyword>
<keyword id="KW-0812">Transmembrane</keyword>
<keyword id="KW-1133">Transmembrane helix</keyword>
<keyword id="KW-0813">Transport</keyword>
<reference key="1">
    <citation type="journal article" date="2006" name="BMC Genomics">
        <title>Complete genome sequence of Shigella flexneri 5b and comparison with Shigella flexneri 2a.</title>
        <authorList>
            <person name="Nie H."/>
            <person name="Yang F."/>
            <person name="Zhang X."/>
            <person name="Yang J."/>
            <person name="Chen L."/>
            <person name="Wang J."/>
            <person name="Xiong Z."/>
            <person name="Peng J."/>
            <person name="Sun L."/>
            <person name="Dong J."/>
            <person name="Xue Y."/>
            <person name="Xu X."/>
            <person name="Chen S."/>
            <person name="Yao Z."/>
            <person name="Shen Y."/>
            <person name="Jin Q."/>
        </authorList>
    </citation>
    <scope>NUCLEOTIDE SEQUENCE [LARGE SCALE GENOMIC DNA]</scope>
    <source>
        <strain>8401</strain>
    </source>
</reference>
<proteinExistence type="inferred from homology"/>